<dbReference type="EMBL" id="BC059688">
    <property type="protein sequence ID" value="AAH59688.1"/>
    <property type="molecule type" value="mRNA"/>
</dbReference>
<dbReference type="RefSeq" id="NP_957105.1">
    <property type="nucleotide sequence ID" value="NM_200811.1"/>
</dbReference>
<dbReference type="SMR" id="Q6PBJ2"/>
<dbReference type="FunCoup" id="Q6PBJ2">
    <property type="interactions" value="867"/>
</dbReference>
<dbReference type="STRING" id="7955.ENSDARP00000140557"/>
<dbReference type="PaxDb" id="7955-ENSDARP00000057261"/>
<dbReference type="Ensembl" id="ENSDART00000165516">
    <property type="protein sequence ID" value="ENSDARP00000140557"/>
    <property type="gene ID" value="ENSDARG00000100514"/>
</dbReference>
<dbReference type="GeneID" id="393784"/>
<dbReference type="KEGG" id="dre:393784"/>
<dbReference type="AGR" id="ZFIN:ZDB-GENE-040426-1784"/>
<dbReference type="CTD" id="29105"/>
<dbReference type="ZFIN" id="ZDB-GENE-040426-1784">
    <property type="gene designation" value="cfap20"/>
</dbReference>
<dbReference type="eggNOG" id="KOG3213">
    <property type="taxonomic scope" value="Eukaryota"/>
</dbReference>
<dbReference type="InParanoid" id="Q6PBJ2"/>
<dbReference type="OMA" id="TTYISCP"/>
<dbReference type="OrthoDB" id="7486196at2759"/>
<dbReference type="PhylomeDB" id="Q6PBJ2"/>
<dbReference type="TreeFam" id="TF313405"/>
<dbReference type="PRO" id="PR:Q6PBJ2"/>
<dbReference type="Proteomes" id="UP000000437">
    <property type="component" value="Chromosome 19"/>
</dbReference>
<dbReference type="Bgee" id="ENSDARG00000100514">
    <property type="expression patterns" value="Expressed in testis and 36 other cell types or tissues"/>
</dbReference>
<dbReference type="ExpressionAtlas" id="Q6PBJ2">
    <property type="expression patterns" value="baseline and differential"/>
</dbReference>
<dbReference type="GO" id="GO:0005879">
    <property type="term" value="C:axonemal microtubule"/>
    <property type="evidence" value="ECO:0000250"/>
    <property type="project" value="UniProtKB"/>
</dbReference>
<dbReference type="GO" id="GO:0005814">
    <property type="term" value="C:centriole"/>
    <property type="evidence" value="ECO:0000250"/>
    <property type="project" value="UniProtKB"/>
</dbReference>
<dbReference type="GO" id="GO:0036064">
    <property type="term" value="C:ciliary basal body"/>
    <property type="evidence" value="ECO:0000250"/>
    <property type="project" value="UniProtKB"/>
</dbReference>
<dbReference type="GO" id="GO:0005929">
    <property type="term" value="C:cilium"/>
    <property type="evidence" value="ECO:0000250"/>
    <property type="project" value="UniProtKB"/>
</dbReference>
<dbReference type="GO" id="GO:0031514">
    <property type="term" value="C:motile cilium"/>
    <property type="evidence" value="ECO:0000318"/>
    <property type="project" value="GO_Central"/>
</dbReference>
<dbReference type="GO" id="GO:0005634">
    <property type="term" value="C:nucleus"/>
    <property type="evidence" value="ECO:0007669"/>
    <property type="project" value="UniProtKB-SubCell"/>
</dbReference>
<dbReference type="GO" id="GO:0060271">
    <property type="term" value="P:cilium assembly"/>
    <property type="evidence" value="ECO:0000315"/>
    <property type="project" value="UniProtKB"/>
</dbReference>
<dbReference type="GO" id="GO:0061371">
    <property type="term" value="P:determination of heart left/right asymmetry"/>
    <property type="evidence" value="ECO:0000315"/>
    <property type="project" value="ZFIN"/>
</dbReference>
<dbReference type="GO" id="GO:0048570">
    <property type="term" value="P:notochord morphogenesis"/>
    <property type="evidence" value="ECO:0000315"/>
    <property type="project" value="ZFIN"/>
</dbReference>
<dbReference type="GO" id="GO:2000147">
    <property type="term" value="P:positive regulation of cell motility"/>
    <property type="evidence" value="ECO:0000250"/>
    <property type="project" value="UniProtKB"/>
</dbReference>
<dbReference type="GO" id="GO:2000253">
    <property type="term" value="P:positive regulation of feeding behavior"/>
    <property type="evidence" value="ECO:0000250"/>
    <property type="project" value="UniProtKB"/>
</dbReference>
<dbReference type="GO" id="GO:0018095">
    <property type="term" value="P:protein polyglutamylation"/>
    <property type="evidence" value="ECO:0000250"/>
    <property type="project" value="UniProtKB"/>
</dbReference>
<dbReference type="GO" id="GO:0060296">
    <property type="term" value="P:regulation of cilium beat frequency involved in ciliary motility"/>
    <property type="evidence" value="ECO:0000250"/>
    <property type="project" value="UniProtKB"/>
</dbReference>
<dbReference type="GO" id="GO:1901207">
    <property type="term" value="P:regulation of heart looping"/>
    <property type="evidence" value="ECO:0000315"/>
    <property type="project" value="UniProtKB"/>
</dbReference>
<dbReference type="GO" id="GO:0014807">
    <property type="term" value="P:regulation of somitogenesis"/>
    <property type="evidence" value="ECO:0000315"/>
    <property type="project" value="UniProtKB"/>
</dbReference>
<dbReference type="GO" id="GO:0001895">
    <property type="term" value="P:retina homeostasis"/>
    <property type="evidence" value="ECO:0000315"/>
    <property type="project" value="ZFIN"/>
</dbReference>
<dbReference type="GO" id="GO:0065001">
    <property type="term" value="P:specification of axis polarity"/>
    <property type="evidence" value="ECO:0000315"/>
    <property type="project" value="UniProtKB"/>
</dbReference>
<dbReference type="InterPro" id="IPR040441">
    <property type="entry name" value="CFA20/CFAP20DC"/>
</dbReference>
<dbReference type="InterPro" id="IPR007714">
    <property type="entry name" value="CFA20_dom"/>
</dbReference>
<dbReference type="PANTHER" id="PTHR12458">
    <property type="entry name" value="ORF PROTEIN"/>
    <property type="match status" value="1"/>
</dbReference>
<dbReference type="Pfam" id="PF05018">
    <property type="entry name" value="CFA20_dom"/>
    <property type="match status" value="1"/>
</dbReference>
<name>CFA20_DANRE</name>
<keyword id="KW-0966">Cell projection</keyword>
<keyword id="KW-0969">Cilium</keyword>
<keyword id="KW-0963">Cytoplasm</keyword>
<keyword id="KW-0206">Cytoskeleton</keyword>
<keyword id="KW-0493">Microtubule</keyword>
<keyword id="KW-0539">Nucleus</keyword>
<keyword id="KW-1185">Reference proteome</keyword>
<sequence length="192" mass="22606">MFKNTFQSGFLSILYSIGSKPLQIWDKKVRNGHIKRITDNDIQSLVLEVEGTNVSTTYITCPADPKKTLGIKLPFLVMIIKNLKKYFTFEVQVLDDKNVRRRFRASNYQSTTRVKPFICTMPMRLDDGWNQIQFNLSDFTRRAYGTNYIETLRVQIHANCRIRRVYFSDRLYSEDELPAEFKLYLPVQNKAK</sequence>
<accession>Q6PBJ2</accession>
<evidence type="ECO:0000250" key="1">
    <source>
        <dbReference type="UniProtKB" id="Q6B857"/>
    </source>
</evidence>
<evidence type="ECO:0000250" key="2">
    <source>
        <dbReference type="UniProtKB" id="Q9Y6A4"/>
    </source>
</evidence>
<evidence type="ECO:0000269" key="3">
    <source>
    </source>
</evidence>
<evidence type="ECO:0000305" key="4"/>
<protein>
    <recommendedName>
        <fullName>Cilia- and flagella-associated protein 20</fullName>
    </recommendedName>
</protein>
<reference key="1">
    <citation type="submission" date="2003-10" db="EMBL/GenBank/DDBJ databases">
        <authorList>
            <consortium name="NIH - Zebrafish Gene Collection (ZGC) project"/>
        </authorList>
    </citation>
    <scope>NUCLEOTIDE SEQUENCE [LARGE SCALE MRNA]</scope>
    <source>
        <tissue>Eye</tissue>
    </source>
</reference>
<reference key="2">
    <citation type="journal article" date="2014" name="Mol. Biol. Cell">
        <title>FAP20 is an inner junction protein of doublet microtubules essential for both the planar asymmetrical waveform and stability of flagella in Chlamydomonas.</title>
        <authorList>
            <person name="Yanagisawa H.A."/>
            <person name="Mathis G."/>
            <person name="Oda T."/>
            <person name="Hirono M."/>
            <person name="Richey E.A."/>
            <person name="Ishikawa H."/>
            <person name="Marshall W.F."/>
            <person name="Kikkawa M."/>
            <person name="Qin H."/>
        </authorList>
    </citation>
    <scope>FUNCTION</scope>
    <scope>DISRUPTION PHENOTYPE</scope>
</reference>
<comment type="function">
    <text evidence="2 3">Cilium- and flagellum-specific protein that plays a role in axonemal structure organization and motility. Microtubule inner protein (MIP) part of the dynein-decorated doublet microtubules (DMTs) in cilia axoneme, which is required for motile cilia beating (By similarity). Involved in the regulation of the size and morphology of cilia. Required for axonemal microtubules polyglutamylation (By similarity). Plays a role in cilia stability (PubMed:24574454).</text>
</comment>
<comment type="subcellular location">
    <subcellularLocation>
        <location evidence="2">Nucleus</location>
    </subcellularLocation>
    <subcellularLocation>
        <location evidence="2">Cytoplasm</location>
        <location evidence="2">Cytoskeleton</location>
        <location evidence="2">Microtubule organizing center</location>
        <location evidence="2">Centrosome</location>
        <location evidence="2">Centriole</location>
    </subcellularLocation>
    <subcellularLocation>
        <location evidence="2">Cytoplasm</location>
        <location evidence="2">Cytoskeleton</location>
        <location evidence="2">Cilium basal body</location>
    </subcellularLocation>
    <subcellularLocation>
        <location evidence="1">Cytoplasm</location>
        <location evidence="1">Cytoskeleton</location>
        <location evidence="1">Cilium axoneme</location>
    </subcellularLocation>
    <text evidence="1">Microtubule inner protein (MIP) part of the dynein-decorated doublet microtubules (DMTs) in cilia axoneme.</text>
</comment>
<comment type="disruption phenotype">
    <text evidence="3">Display curved body axis, short somite length and defective heart-looping orientation.</text>
</comment>
<comment type="similarity">
    <text evidence="4">Belongs to the CFAP20 family.</text>
</comment>
<feature type="chain" id="PRO_0000296402" description="Cilia- and flagella-associated protein 20">
    <location>
        <begin position="1"/>
        <end position="192"/>
    </location>
</feature>
<gene>
    <name type="primary">cfap20</name>
    <name type="ORF">zgc:73380</name>
</gene>
<organism>
    <name type="scientific">Danio rerio</name>
    <name type="common">Zebrafish</name>
    <name type="synonym">Brachydanio rerio</name>
    <dbReference type="NCBI Taxonomy" id="7955"/>
    <lineage>
        <taxon>Eukaryota</taxon>
        <taxon>Metazoa</taxon>
        <taxon>Chordata</taxon>
        <taxon>Craniata</taxon>
        <taxon>Vertebrata</taxon>
        <taxon>Euteleostomi</taxon>
        <taxon>Actinopterygii</taxon>
        <taxon>Neopterygii</taxon>
        <taxon>Teleostei</taxon>
        <taxon>Ostariophysi</taxon>
        <taxon>Cypriniformes</taxon>
        <taxon>Danionidae</taxon>
        <taxon>Danioninae</taxon>
        <taxon>Danio</taxon>
    </lineage>
</organism>
<proteinExistence type="evidence at transcript level"/>